<feature type="chain" id="PRO_1000073023" description="Ribosome maturation factor RimP">
    <location>
        <begin position="1"/>
        <end position="151"/>
    </location>
</feature>
<comment type="function">
    <text evidence="1">Required for maturation of 30S ribosomal subunits.</text>
</comment>
<comment type="subcellular location">
    <subcellularLocation>
        <location evidence="1">Cytoplasm</location>
    </subcellularLocation>
</comment>
<comment type="similarity">
    <text evidence="1">Belongs to the RimP family.</text>
</comment>
<protein>
    <recommendedName>
        <fullName evidence="1">Ribosome maturation factor RimP</fullName>
    </recommendedName>
</protein>
<sequence length="151" mass="16677">MTGLERQLTEMLEAPVVAAGYELVGLEFVRAGQHSTLRIFIDHENGITVEDCAEVSRQVSAVLDVEDPISVVYNLEVSSPGLERPLFKAAHYEQFIGHEVSIVLKMAVGNRRKWKGVIQSIDGETVAVMVDGQEEHFALSNISKANLIPKF</sequence>
<dbReference type="EMBL" id="CP000627">
    <property type="protein sequence ID" value="ABQ20002.1"/>
    <property type="molecule type" value="Genomic_DNA"/>
</dbReference>
<dbReference type="EMBL" id="CP001235">
    <property type="protein sequence ID" value="ACP08676.1"/>
    <property type="molecule type" value="Genomic_DNA"/>
</dbReference>
<dbReference type="RefSeq" id="WP_000147148.1">
    <property type="nucleotide sequence ID" value="NZ_JAACZH010000006.1"/>
</dbReference>
<dbReference type="SMR" id="A5F924"/>
<dbReference type="GeneID" id="69720603"/>
<dbReference type="KEGG" id="vco:VC0395_A0172"/>
<dbReference type="KEGG" id="vcr:VC395_0658"/>
<dbReference type="PATRIC" id="fig|345073.21.peg.639"/>
<dbReference type="eggNOG" id="COG0779">
    <property type="taxonomic scope" value="Bacteria"/>
</dbReference>
<dbReference type="HOGENOM" id="CLU_070525_1_1_6"/>
<dbReference type="OrthoDB" id="9805006at2"/>
<dbReference type="Proteomes" id="UP000000249">
    <property type="component" value="Chromosome 2"/>
</dbReference>
<dbReference type="GO" id="GO:0005829">
    <property type="term" value="C:cytosol"/>
    <property type="evidence" value="ECO:0007669"/>
    <property type="project" value="TreeGrafter"/>
</dbReference>
<dbReference type="GO" id="GO:0000028">
    <property type="term" value="P:ribosomal small subunit assembly"/>
    <property type="evidence" value="ECO:0007669"/>
    <property type="project" value="TreeGrafter"/>
</dbReference>
<dbReference type="GO" id="GO:0006412">
    <property type="term" value="P:translation"/>
    <property type="evidence" value="ECO:0007669"/>
    <property type="project" value="TreeGrafter"/>
</dbReference>
<dbReference type="CDD" id="cd01734">
    <property type="entry name" value="YlxS_C"/>
    <property type="match status" value="1"/>
</dbReference>
<dbReference type="FunFam" id="2.30.30.180:FF:000001">
    <property type="entry name" value="Ribosome maturation factor RimP"/>
    <property type="match status" value="1"/>
</dbReference>
<dbReference type="FunFam" id="3.30.300.70:FF:000001">
    <property type="entry name" value="Ribosome maturation factor RimP"/>
    <property type="match status" value="1"/>
</dbReference>
<dbReference type="Gene3D" id="2.30.30.180">
    <property type="entry name" value="Ribosome maturation factor RimP, C-terminal domain"/>
    <property type="match status" value="1"/>
</dbReference>
<dbReference type="Gene3D" id="3.30.300.70">
    <property type="entry name" value="RimP-like superfamily, N-terminal"/>
    <property type="match status" value="1"/>
</dbReference>
<dbReference type="HAMAP" id="MF_01077">
    <property type="entry name" value="RimP"/>
    <property type="match status" value="1"/>
</dbReference>
<dbReference type="InterPro" id="IPR003728">
    <property type="entry name" value="Ribosome_maturation_RimP"/>
</dbReference>
<dbReference type="InterPro" id="IPR028998">
    <property type="entry name" value="RimP_C"/>
</dbReference>
<dbReference type="InterPro" id="IPR036847">
    <property type="entry name" value="RimP_C_sf"/>
</dbReference>
<dbReference type="InterPro" id="IPR028989">
    <property type="entry name" value="RimP_N"/>
</dbReference>
<dbReference type="InterPro" id="IPR035956">
    <property type="entry name" value="RimP_N_sf"/>
</dbReference>
<dbReference type="NCBIfam" id="NF000927">
    <property type="entry name" value="PRK00092.1-1"/>
    <property type="match status" value="1"/>
</dbReference>
<dbReference type="PANTHER" id="PTHR33867">
    <property type="entry name" value="RIBOSOME MATURATION FACTOR RIMP"/>
    <property type="match status" value="1"/>
</dbReference>
<dbReference type="PANTHER" id="PTHR33867:SF1">
    <property type="entry name" value="RIBOSOME MATURATION FACTOR RIMP"/>
    <property type="match status" value="1"/>
</dbReference>
<dbReference type="Pfam" id="PF17384">
    <property type="entry name" value="DUF150_C"/>
    <property type="match status" value="1"/>
</dbReference>
<dbReference type="Pfam" id="PF02576">
    <property type="entry name" value="RimP_N"/>
    <property type="match status" value="1"/>
</dbReference>
<dbReference type="SUPFAM" id="SSF74942">
    <property type="entry name" value="YhbC-like, C-terminal domain"/>
    <property type="match status" value="1"/>
</dbReference>
<dbReference type="SUPFAM" id="SSF75420">
    <property type="entry name" value="YhbC-like, N-terminal domain"/>
    <property type="match status" value="1"/>
</dbReference>
<reference key="1">
    <citation type="submission" date="2007-03" db="EMBL/GenBank/DDBJ databases">
        <authorList>
            <person name="Heidelberg J."/>
        </authorList>
    </citation>
    <scope>NUCLEOTIDE SEQUENCE [LARGE SCALE GENOMIC DNA]</scope>
    <source>
        <strain>ATCC 39541 / Classical Ogawa 395 / O395</strain>
    </source>
</reference>
<reference key="2">
    <citation type="journal article" date="2008" name="PLoS ONE">
        <title>A recalibrated molecular clock and independent origins for the cholera pandemic clones.</title>
        <authorList>
            <person name="Feng L."/>
            <person name="Reeves P.R."/>
            <person name="Lan R."/>
            <person name="Ren Y."/>
            <person name="Gao C."/>
            <person name="Zhou Z."/>
            <person name="Ren Y."/>
            <person name="Cheng J."/>
            <person name="Wang W."/>
            <person name="Wang J."/>
            <person name="Qian W."/>
            <person name="Li D."/>
            <person name="Wang L."/>
        </authorList>
    </citation>
    <scope>NUCLEOTIDE SEQUENCE [LARGE SCALE GENOMIC DNA]</scope>
    <source>
        <strain>ATCC 39541 / Classical Ogawa 395 / O395</strain>
    </source>
</reference>
<proteinExistence type="inferred from homology"/>
<gene>
    <name evidence="1" type="primary">rimP</name>
    <name type="ordered locus">VC0395_A0172</name>
    <name type="ordered locus">VC395_0658</name>
</gene>
<keyword id="KW-0963">Cytoplasm</keyword>
<keyword id="KW-0690">Ribosome biogenesis</keyword>
<organism>
    <name type="scientific">Vibrio cholerae serotype O1 (strain ATCC 39541 / Classical Ogawa 395 / O395)</name>
    <dbReference type="NCBI Taxonomy" id="345073"/>
    <lineage>
        <taxon>Bacteria</taxon>
        <taxon>Pseudomonadati</taxon>
        <taxon>Pseudomonadota</taxon>
        <taxon>Gammaproteobacteria</taxon>
        <taxon>Vibrionales</taxon>
        <taxon>Vibrionaceae</taxon>
        <taxon>Vibrio</taxon>
    </lineage>
</organism>
<name>RIMP_VIBC3</name>
<evidence type="ECO:0000255" key="1">
    <source>
        <dbReference type="HAMAP-Rule" id="MF_01077"/>
    </source>
</evidence>
<accession>A5F924</accession>
<accession>C3LXV2</accession>